<dbReference type="EC" id="2.7.4.6" evidence="1"/>
<dbReference type="EMBL" id="AE017125">
    <property type="protein sequence ID" value="AAP77274.1"/>
    <property type="molecule type" value="Genomic_DNA"/>
</dbReference>
<dbReference type="RefSeq" id="WP_011115519.1">
    <property type="nucleotide sequence ID" value="NC_004917.1"/>
</dbReference>
<dbReference type="SMR" id="Q7VIC9"/>
<dbReference type="STRING" id="235279.HH_0677"/>
<dbReference type="KEGG" id="hhe:HH_0677"/>
<dbReference type="eggNOG" id="COG0105">
    <property type="taxonomic scope" value="Bacteria"/>
</dbReference>
<dbReference type="HOGENOM" id="CLU_060216_8_1_7"/>
<dbReference type="OrthoDB" id="9801161at2"/>
<dbReference type="Proteomes" id="UP000002495">
    <property type="component" value="Chromosome"/>
</dbReference>
<dbReference type="GO" id="GO:0005737">
    <property type="term" value="C:cytoplasm"/>
    <property type="evidence" value="ECO:0007669"/>
    <property type="project" value="UniProtKB-SubCell"/>
</dbReference>
<dbReference type="GO" id="GO:0005524">
    <property type="term" value="F:ATP binding"/>
    <property type="evidence" value="ECO:0007669"/>
    <property type="project" value="UniProtKB-UniRule"/>
</dbReference>
<dbReference type="GO" id="GO:0046872">
    <property type="term" value="F:metal ion binding"/>
    <property type="evidence" value="ECO:0007669"/>
    <property type="project" value="UniProtKB-KW"/>
</dbReference>
<dbReference type="GO" id="GO:0004550">
    <property type="term" value="F:nucleoside diphosphate kinase activity"/>
    <property type="evidence" value="ECO:0007669"/>
    <property type="project" value="UniProtKB-UniRule"/>
</dbReference>
<dbReference type="GO" id="GO:0006241">
    <property type="term" value="P:CTP biosynthetic process"/>
    <property type="evidence" value="ECO:0007669"/>
    <property type="project" value="UniProtKB-UniRule"/>
</dbReference>
<dbReference type="GO" id="GO:0006183">
    <property type="term" value="P:GTP biosynthetic process"/>
    <property type="evidence" value="ECO:0007669"/>
    <property type="project" value="UniProtKB-UniRule"/>
</dbReference>
<dbReference type="GO" id="GO:0006228">
    <property type="term" value="P:UTP biosynthetic process"/>
    <property type="evidence" value="ECO:0007669"/>
    <property type="project" value="UniProtKB-UniRule"/>
</dbReference>
<dbReference type="CDD" id="cd04413">
    <property type="entry name" value="NDPk_I"/>
    <property type="match status" value="1"/>
</dbReference>
<dbReference type="FunFam" id="3.30.70.141:FF:000001">
    <property type="entry name" value="Nucleoside diphosphate kinase"/>
    <property type="match status" value="1"/>
</dbReference>
<dbReference type="Gene3D" id="3.30.70.141">
    <property type="entry name" value="Nucleoside diphosphate kinase-like domain"/>
    <property type="match status" value="1"/>
</dbReference>
<dbReference type="HAMAP" id="MF_00451">
    <property type="entry name" value="NDP_kinase"/>
    <property type="match status" value="1"/>
</dbReference>
<dbReference type="InterPro" id="IPR034907">
    <property type="entry name" value="NDK-like_dom"/>
</dbReference>
<dbReference type="InterPro" id="IPR036850">
    <property type="entry name" value="NDK-like_dom_sf"/>
</dbReference>
<dbReference type="InterPro" id="IPR001564">
    <property type="entry name" value="Nucleoside_diP_kinase"/>
</dbReference>
<dbReference type="InterPro" id="IPR023005">
    <property type="entry name" value="Nucleoside_diP_kinase_AS"/>
</dbReference>
<dbReference type="NCBIfam" id="NF001908">
    <property type="entry name" value="PRK00668.1"/>
    <property type="match status" value="1"/>
</dbReference>
<dbReference type="PANTHER" id="PTHR11349">
    <property type="entry name" value="NUCLEOSIDE DIPHOSPHATE KINASE"/>
    <property type="match status" value="1"/>
</dbReference>
<dbReference type="Pfam" id="PF00334">
    <property type="entry name" value="NDK"/>
    <property type="match status" value="1"/>
</dbReference>
<dbReference type="PRINTS" id="PR01243">
    <property type="entry name" value="NUCDPKINASE"/>
</dbReference>
<dbReference type="SMART" id="SM00562">
    <property type="entry name" value="NDK"/>
    <property type="match status" value="1"/>
</dbReference>
<dbReference type="SUPFAM" id="SSF54919">
    <property type="entry name" value="Nucleoside diphosphate kinase, NDK"/>
    <property type="match status" value="1"/>
</dbReference>
<dbReference type="PROSITE" id="PS00469">
    <property type="entry name" value="NDPK"/>
    <property type="match status" value="1"/>
</dbReference>
<dbReference type="PROSITE" id="PS51374">
    <property type="entry name" value="NDPK_LIKE"/>
    <property type="match status" value="1"/>
</dbReference>
<comment type="function">
    <text evidence="1">Major role in the synthesis of nucleoside triphosphates other than ATP. The ATP gamma phosphate is transferred to the NDP beta phosphate via a ping-pong mechanism, using a phosphorylated active-site intermediate.</text>
</comment>
<comment type="catalytic activity">
    <reaction evidence="1">
        <text>a 2'-deoxyribonucleoside 5'-diphosphate + ATP = a 2'-deoxyribonucleoside 5'-triphosphate + ADP</text>
        <dbReference type="Rhea" id="RHEA:44640"/>
        <dbReference type="ChEBI" id="CHEBI:30616"/>
        <dbReference type="ChEBI" id="CHEBI:61560"/>
        <dbReference type="ChEBI" id="CHEBI:73316"/>
        <dbReference type="ChEBI" id="CHEBI:456216"/>
        <dbReference type="EC" id="2.7.4.6"/>
    </reaction>
</comment>
<comment type="catalytic activity">
    <reaction evidence="1">
        <text>a ribonucleoside 5'-diphosphate + ATP = a ribonucleoside 5'-triphosphate + ADP</text>
        <dbReference type="Rhea" id="RHEA:18113"/>
        <dbReference type="ChEBI" id="CHEBI:30616"/>
        <dbReference type="ChEBI" id="CHEBI:57930"/>
        <dbReference type="ChEBI" id="CHEBI:61557"/>
        <dbReference type="ChEBI" id="CHEBI:456216"/>
        <dbReference type="EC" id="2.7.4.6"/>
    </reaction>
</comment>
<comment type="cofactor">
    <cofactor evidence="1">
        <name>Mg(2+)</name>
        <dbReference type="ChEBI" id="CHEBI:18420"/>
    </cofactor>
</comment>
<comment type="subunit">
    <text evidence="1">Homotetramer.</text>
</comment>
<comment type="subcellular location">
    <subcellularLocation>
        <location evidence="1">Cytoplasm</location>
    </subcellularLocation>
</comment>
<comment type="similarity">
    <text evidence="1">Belongs to the NDK family.</text>
</comment>
<organism>
    <name type="scientific">Helicobacter hepaticus (strain ATCC 51449 / 3B1)</name>
    <dbReference type="NCBI Taxonomy" id="235279"/>
    <lineage>
        <taxon>Bacteria</taxon>
        <taxon>Pseudomonadati</taxon>
        <taxon>Campylobacterota</taxon>
        <taxon>Epsilonproteobacteria</taxon>
        <taxon>Campylobacterales</taxon>
        <taxon>Helicobacteraceae</taxon>
        <taxon>Helicobacter</taxon>
    </lineage>
</organism>
<sequence length="137" mass="15243">MEQTLSIIKPDAVKKGVIGKIIDRFESNNLRICAMKKLQLTRCDAEAFYAIHKERPFFKDLVDFMISGPVVVMVLEGNNAVMKNRDLMGATNPKEAEAGTIRADFAQSIDANAVHGSDSLENAKNEIAFFFSTREIC</sequence>
<evidence type="ECO:0000255" key="1">
    <source>
        <dbReference type="HAMAP-Rule" id="MF_00451"/>
    </source>
</evidence>
<reference key="1">
    <citation type="journal article" date="2003" name="Proc. Natl. Acad. Sci. U.S.A.">
        <title>The complete genome sequence of the carcinogenic bacterium Helicobacter hepaticus.</title>
        <authorList>
            <person name="Suerbaum S."/>
            <person name="Josenhans C."/>
            <person name="Sterzenbach T."/>
            <person name="Drescher B."/>
            <person name="Brandt P."/>
            <person name="Bell M."/>
            <person name="Droege M."/>
            <person name="Fartmann B."/>
            <person name="Fischer H.-P."/>
            <person name="Ge Z."/>
            <person name="Hoerster A."/>
            <person name="Holland R."/>
            <person name="Klein K."/>
            <person name="Koenig J."/>
            <person name="Macko L."/>
            <person name="Mendz G.L."/>
            <person name="Nyakatura G."/>
            <person name="Schauer D.B."/>
            <person name="Shen Z."/>
            <person name="Weber J."/>
            <person name="Frosch M."/>
            <person name="Fox J.G."/>
        </authorList>
    </citation>
    <scope>NUCLEOTIDE SEQUENCE [LARGE SCALE GENOMIC DNA]</scope>
    <source>
        <strain>ATCC 51449 / 3B1</strain>
    </source>
</reference>
<name>NDK_HELHP</name>
<protein>
    <recommendedName>
        <fullName evidence="1">Nucleoside diphosphate kinase</fullName>
        <shortName evidence="1">NDK</shortName>
        <shortName evidence="1">NDP kinase</shortName>
        <ecNumber evidence="1">2.7.4.6</ecNumber>
    </recommendedName>
    <alternativeName>
        <fullName evidence="1">Nucleoside-2-P kinase</fullName>
    </alternativeName>
</protein>
<feature type="chain" id="PRO_0000136991" description="Nucleoside diphosphate kinase">
    <location>
        <begin position="1"/>
        <end position="137"/>
    </location>
</feature>
<feature type="active site" description="Pros-phosphohistidine intermediate" evidence="1">
    <location>
        <position position="115"/>
    </location>
</feature>
<feature type="binding site" evidence="1">
    <location>
        <position position="9"/>
    </location>
    <ligand>
        <name>ATP</name>
        <dbReference type="ChEBI" id="CHEBI:30616"/>
    </ligand>
</feature>
<feature type="binding site" evidence="1">
    <location>
        <position position="57"/>
    </location>
    <ligand>
        <name>ATP</name>
        <dbReference type="ChEBI" id="CHEBI:30616"/>
    </ligand>
</feature>
<feature type="binding site" evidence="1">
    <location>
        <position position="85"/>
    </location>
    <ligand>
        <name>ATP</name>
        <dbReference type="ChEBI" id="CHEBI:30616"/>
    </ligand>
</feature>
<feature type="binding site" evidence="1">
    <location>
        <position position="91"/>
    </location>
    <ligand>
        <name>ATP</name>
        <dbReference type="ChEBI" id="CHEBI:30616"/>
    </ligand>
</feature>
<feature type="binding site" evidence="1">
    <location>
        <position position="102"/>
    </location>
    <ligand>
        <name>ATP</name>
        <dbReference type="ChEBI" id="CHEBI:30616"/>
    </ligand>
</feature>
<feature type="binding site" evidence="1">
    <location>
        <position position="112"/>
    </location>
    <ligand>
        <name>ATP</name>
        <dbReference type="ChEBI" id="CHEBI:30616"/>
    </ligand>
</feature>
<keyword id="KW-0067">ATP-binding</keyword>
<keyword id="KW-0963">Cytoplasm</keyword>
<keyword id="KW-0418">Kinase</keyword>
<keyword id="KW-0460">Magnesium</keyword>
<keyword id="KW-0479">Metal-binding</keyword>
<keyword id="KW-0546">Nucleotide metabolism</keyword>
<keyword id="KW-0547">Nucleotide-binding</keyword>
<keyword id="KW-0597">Phosphoprotein</keyword>
<keyword id="KW-1185">Reference proteome</keyword>
<keyword id="KW-0808">Transferase</keyword>
<gene>
    <name evidence="1" type="primary">ndk</name>
    <name type="ordered locus">HH_0677</name>
</gene>
<accession>Q7VIC9</accession>
<proteinExistence type="inferred from homology"/>